<name>MED7_PIG</name>
<reference key="1">
    <citation type="journal article" date="2006" name="Cytogenet. Genome Res.">
        <title>Assignment of CRSP9, ETF1 and TMEM59 genes to porcine chromosomes.</title>
        <authorList>
            <person name="Shao M.Y."/>
            <person name="Wang H."/>
            <person name="Zhu Z.M."/>
            <person name="Yang S.L."/>
            <person name="Li K."/>
        </authorList>
    </citation>
    <scope>NUCLEOTIDE SEQUENCE [GENOMIC DNA / MRNA]</scope>
</reference>
<gene>
    <name type="primary">MED7</name>
    <name type="synonym">CRSP9</name>
</gene>
<comment type="function">
    <text evidence="1">Component of the Mediator complex, a coactivator involved in the regulated transcription of nearly all RNA polymerase II-dependent genes. Mediator functions as a bridge to convey information from gene-specific regulatory proteins to the basal RNA polymerase II transcription machinery. Mediator is recruited to promoters by direct interactions with regulatory proteins and serves as a scaffold for the assembly of a functional preinitiation complex with RNA polymerase II and the general transcription factors (By similarity).</text>
</comment>
<comment type="subunit">
    <text evidence="1">Component of the Mediator complex, which is composed of MED1, MED4, MED6, MED7, MED8, MED9, MED10, MED11, MED12, MED13, MED13L, MED14, MED15, MED16, MED17, MED18, MED19, MED20, MED21, MED22, MED23, MED24, MED25, MED26, MED27, MED29, MED30, MED31, CCNC, CDK8 and CDC2L6/CDK11. The MED12, MED13, CCNC and CDK8 subunits form a distinct module termed the CDK8 module. Mediator containing the CDK8 module is less active than Mediator lacking this module in supporting transcriptional activation. Individual preparations of the Mediator complex lacking one or more distinct subunits have been variously termed ARC, CRSP, DRIP, PC2, SMCC and TRAP (By similarity).</text>
</comment>
<comment type="subcellular location">
    <subcellularLocation>
        <location evidence="1">Nucleus</location>
    </subcellularLocation>
</comment>
<comment type="similarity">
    <text evidence="4">Belongs to the Mediator complex subunit 7 family.</text>
</comment>
<feature type="chain" id="PRO_0000303180" description="Mediator of RNA polymerase II transcription subunit 7">
    <location>
        <begin position="1"/>
        <end position="233"/>
    </location>
</feature>
<feature type="region of interest" description="Disordered" evidence="3">
    <location>
        <begin position="188"/>
        <end position="213"/>
    </location>
</feature>
<feature type="compositionally biased region" description="Basic and acidic residues" evidence="3">
    <location>
        <begin position="203"/>
        <end position="213"/>
    </location>
</feature>
<feature type="modified residue" description="Phosphoserine" evidence="2">
    <location>
        <position position="194"/>
    </location>
</feature>
<feature type="cross-link" description="Glycyl lysine isopeptide (Lys-Gly) (interchain with G-Cter in SUMO1); alternate" evidence="2">
    <location>
        <position position="185"/>
    </location>
</feature>
<feature type="cross-link" description="Glycyl lysine isopeptide (Lys-Gly) (interchain with G-Cter in SUMO2); alternate" evidence="2">
    <location>
        <position position="185"/>
    </location>
</feature>
<feature type="sequence conflict" description="In Ref. 1; ABB02676." evidence="4" ref="1">
    <original>E</original>
    <variation>V</variation>
    <location>
        <position position="179"/>
    </location>
</feature>
<accession>Q2F7Z4</accession>
<accession>Q2F7Z6</accession>
<dbReference type="EMBL" id="DQ200861">
    <property type="protein sequence ID" value="ABB02674.1"/>
    <property type="molecule type" value="Genomic_DNA"/>
</dbReference>
<dbReference type="EMBL" id="DQ200863">
    <property type="protein sequence ID" value="ABB02676.1"/>
    <property type="molecule type" value="mRNA"/>
</dbReference>
<dbReference type="RefSeq" id="NP_001038080.1">
    <property type="nucleotide sequence ID" value="NM_001044615.1"/>
</dbReference>
<dbReference type="RefSeq" id="XP_005672641.1">
    <property type="nucleotide sequence ID" value="XM_005672584.3"/>
</dbReference>
<dbReference type="RefSeq" id="XP_005672642.1">
    <property type="nucleotide sequence ID" value="XM_005672585.3"/>
</dbReference>
<dbReference type="RefSeq" id="XP_005672643.1">
    <property type="nucleotide sequence ID" value="XM_005672586.3"/>
</dbReference>
<dbReference type="RefSeq" id="XP_005672644.1">
    <property type="nucleotide sequence ID" value="XM_005672587.3"/>
</dbReference>
<dbReference type="RefSeq" id="XP_020932247.1">
    <property type="nucleotide sequence ID" value="XM_021076588.1"/>
</dbReference>
<dbReference type="RefSeq" id="XP_020932248.1">
    <property type="nucleotide sequence ID" value="XM_021076589.1"/>
</dbReference>
<dbReference type="SMR" id="Q2F7Z4"/>
<dbReference type="FunCoup" id="Q2F7Z4">
    <property type="interactions" value="1880"/>
</dbReference>
<dbReference type="STRING" id="9823.ENSSSCP00000070953"/>
<dbReference type="PaxDb" id="9823-ENSSSCP00000018072"/>
<dbReference type="Ensembl" id="ENSSSCT00000018572.5">
    <property type="protein sequence ID" value="ENSSSCP00000018072.2"/>
    <property type="gene ID" value="ENSSSCG00000017058.5"/>
</dbReference>
<dbReference type="Ensembl" id="ENSSSCT00000068622.2">
    <property type="protein sequence ID" value="ENSSSCP00000067996.1"/>
    <property type="gene ID" value="ENSSSCG00000017058.5"/>
</dbReference>
<dbReference type="Ensembl" id="ENSSSCT00000068927.2">
    <property type="protein sequence ID" value="ENSSSCP00000074390.1"/>
    <property type="gene ID" value="ENSSSCG00000017058.5"/>
</dbReference>
<dbReference type="Ensembl" id="ENSSSCT00015007794.1">
    <property type="protein sequence ID" value="ENSSSCP00015003154.1"/>
    <property type="gene ID" value="ENSSSCG00015005855.1"/>
</dbReference>
<dbReference type="Ensembl" id="ENSSSCT00015007824.1">
    <property type="protein sequence ID" value="ENSSSCP00015003170.1"/>
    <property type="gene ID" value="ENSSSCG00015005855.1"/>
</dbReference>
<dbReference type="Ensembl" id="ENSSSCT00015007841.1">
    <property type="protein sequence ID" value="ENSSSCP00015003173.1"/>
    <property type="gene ID" value="ENSSSCG00015005855.1"/>
</dbReference>
<dbReference type="Ensembl" id="ENSSSCT00015007847.1">
    <property type="protein sequence ID" value="ENSSSCP00015003175.1"/>
    <property type="gene ID" value="ENSSSCG00015005855.1"/>
</dbReference>
<dbReference type="Ensembl" id="ENSSSCT00015007851.1">
    <property type="protein sequence ID" value="ENSSSCP00015003177.1"/>
    <property type="gene ID" value="ENSSSCG00015005855.1"/>
</dbReference>
<dbReference type="Ensembl" id="ENSSSCT00025038954.1">
    <property type="protein sequence ID" value="ENSSSCP00025016480.1"/>
    <property type="gene ID" value="ENSSSCG00025028703.1"/>
</dbReference>
<dbReference type="Ensembl" id="ENSSSCT00025039051.1">
    <property type="protein sequence ID" value="ENSSSCP00025016524.1"/>
    <property type="gene ID" value="ENSSSCG00025028703.1"/>
</dbReference>
<dbReference type="Ensembl" id="ENSSSCT00025039107.1">
    <property type="protein sequence ID" value="ENSSSCP00025016550.1"/>
    <property type="gene ID" value="ENSSSCG00025028703.1"/>
</dbReference>
<dbReference type="Ensembl" id="ENSSSCT00025039130.1">
    <property type="protein sequence ID" value="ENSSSCP00025016561.1"/>
    <property type="gene ID" value="ENSSSCG00025028703.1"/>
</dbReference>
<dbReference type="Ensembl" id="ENSSSCT00025039175.1">
    <property type="protein sequence ID" value="ENSSSCP00025016582.1"/>
    <property type="gene ID" value="ENSSSCG00025028703.1"/>
</dbReference>
<dbReference type="Ensembl" id="ENSSSCT00025039190.1">
    <property type="protein sequence ID" value="ENSSSCP00025016589.1"/>
    <property type="gene ID" value="ENSSSCG00025028703.1"/>
</dbReference>
<dbReference type="Ensembl" id="ENSSSCT00030020331.1">
    <property type="protein sequence ID" value="ENSSSCP00030009062.1"/>
    <property type="gene ID" value="ENSSSCG00030014759.1"/>
</dbReference>
<dbReference type="Ensembl" id="ENSSSCT00030020337.1">
    <property type="protein sequence ID" value="ENSSSCP00030009063.1"/>
    <property type="gene ID" value="ENSSSCG00030014759.1"/>
</dbReference>
<dbReference type="Ensembl" id="ENSSSCT00030020345.1">
    <property type="protein sequence ID" value="ENSSSCP00030009067.1"/>
    <property type="gene ID" value="ENSSSCG00030014759.1"/>
</dbReference>
<dbReference type="Ensembl" id="ENSSSCT00030020355.1">
    <property type="protein sequence ID" value="ENSSSCP00030009071.1"/>
    <property type="gene ID" value="ENSSSCG00030014759.1"/>
</dbReference>
<dbReference type="Ensembl" id="ENSSSCT00030020364.1">
    <property type="protein sequence ID" value="ENSSSCP00030009076.1"/>
    <property type="gene ID" value="ENSSSCG00030014759.1"/>
</dbReference>
<dbReference type="Ensembl" id="ENSSSCT00030020376.1">
    <property type="protein sequence ID" value="ENSSSCP00030009083.1"/>
    <property type="gene ID" value="ENSSSCG00030014759.1"/>
</dbReference>
<dbReference type="Ensembl" id="ENSSSCT00035066123.1">
    <property type="protein sequence ID" value="ENSSSCP00035026823.1"/>
    <property type="gene ID" value="ENSSSCG00035049608.1"/>
</dbReference>
<dbReference type="Ensembl" id="ENSSSCT00035066129.1">
    <property type="protein sequence ID" value="ENSSSCP00035026826.1"/>
    <property type="gene ID" value="ENSSSCG00035049608.1"/>
</dbReference>
<dbReference type="Ensembl" id="ENSSSCT00035066131.1">
    <property type="protein sequence ID" value="ENSSSCP00035026827.1"/>
    <property type="gene ID" value="ENSSSCG00035049608.1"/>
</dbReference>
<dbReference type="Ensembl" id="ENSSSCT00035066134.1">
    <property type="protein sequence ID" value="ENSSSCP00035026829.1"/>
    <property type="gene ID" value="ENSSSCG00035049608.1"/>
</dbReference>
<dbReference type="Ensembl" id="ENSSSCT00035066136.1">
    <property type="protein sequence ID" value="ENSSSCP00035026830.1"/>
    <property type="gene ID" value="ENSSSCG00035049608.1"/>
</dbReference>
<dbReference type="Ensembl" id="ENSSSCT00040063580.1">
    <property type="protein sequence ID" value="ENSSSCP00040026848.1"/>
    <property type="gene ID" value="ENSSSCG00040047209.1"/>
</dbReference>
<dbReference type="Ensembl" id="ENSSSCT00040063632.1">
    <property type="protein sequence ID" value="ENSSSCP00040026874.1"/>
    <property type="gene ID" value="ENSSSCG00040047209.1"/>
</dbReference>
<dbReference type="Ensembl" id="ENSSSCT00040063657.1">
    <property type="protein sequence ID" value="ENSSSCP00040026883.1"/>
    <property type="gene ID" value="ENSSSCG00040047209.1"/>
</dbReference>
<dbReference type="Ensembl" id="ENSSSCT00040063760.1">
    <property type="protein sequence ID" value="ENSSSCP00040026925.1"/>
    <property type="gene ID" value="ENSSSCG00040047209.1"/>
</dbReference>
<dbReference type="Ensembl" id="ENSSSCT00040063793.1">
    <property type="protein sequence ID" value="ENSSSCP00040026941.1"/>
    <property type="gene ID" value="ENSSSCG00040047209.1"/>
</dbReference>
<dbReference type="Ensembl" id="ENSSSCT00045013336.1">
    <property type="protein sequence ID" value="ENSSSCP00045009196.1"/>
    <property type="gene ID" value="ENSSSCG00045007956.1"/>
</dbReference>
<dbReference type="Ensembl" id="ENSSSCT00045013361.1">
    <property type="protein sequence ID" value="ENSSSCP00045009214.1"/>
    <property type="gene ID" value="ENSSSCG00045007956.1"/>
</dbReference>
<dbReference type="Ensembl" id="ENSSSCT00045013376.1">
    <property type="protein sequence ID" value="ENSSSCP00045009225.1"/>
    <property type="gene ID" value="ENSSSCG00045007956.1"/>
</dbReference>
<dbReference type="Ensembl" id="ENSSSCT00045013394.1">
    <property type="protein sequence ID" value="ENSSSCP00045009240.1"/>
    <property type="gene ID" value="ENSSSCG00045007956.1"/>
</dbReference>
<dbReference type="Ensembl" id="ENSSSCT00045013407.1">
    <property type="protein sequence ID" value="ENSSSCP00045009250.1"/>
    <property type="gene ID" value="ENSSSCG00045007956.1"/>
</dbReference>
<dbReference type="Ensembl" id="ENSSSCT00050041688.1">
    <property type="protein sequence ID" value="ENSSSCP00050017224.1"/>
    <property type="gene ID" value="ENSSSCG00050031016.1"/>
</dbReference>
<dbReference type="Ensembl" id="ENSSSCT00050041694.1">
    <property type="protein sequence ID" value="ENSSSCP00050017226.1"/>
    <property type="gene ID" value="ENSSSCG00050031016.1"/>
</dbReference>
<dbReference type="Ensembl" id="ENSSSCT00050041699.1">
    <property type="protein sequence ID" value="ENSSSCP00050017228.1"/>
    <property type="gene ID" value="ENSSSCG00050031016.1"/>
</dbReference>
<dbReference type="Ensembl" id="ENSSSCT00050041704.1">
    <property type="protein sequence ID" value="ENSSSCP00050017232.1"/>
    <property type="gene ID" value="ENSSSCG00050031016.1"/>
</dbReference>
<dbReference type="Ensembl" id="ENSSSCT00050041707.1">
    <property type="protein sequence ID" value="ENSSSCP00050017234.1"/>
    <property type="gene ID" value="ENSSSCG00050031016.1"/>
</dbReference>
<dbReference type="Ensembl" id="ENSSSCT00050041713.1">
    <property type="protein sequence ID" value="ENSSSCP00050017240.1"/>
    <property type="gene ID" value="ENSSSCG00050031016.1"/>
</dbReference>
<dbReference type="Ensembl" id="ENSSSCT00055013659.1">
    <property type="protein sequence ID" value="ENSSSCP00055010755.1"/>
    <property type="gene ID" value="ENSSSCG00055007049.1"/>
</dbReference>
<dbReference type="Ensembl" id="ENSSSCT00055013696.1">
    <property type="protein sequence ID" value="ENSSSCP00055010783.1"/>
    <property type="gene ID" value="ENSSSCG00055007049.1"/>
</dbReference>
<dbReference type="Ensembl" id="ENSSSCT00055013718.1">
    <property type="protein sequence ID" value="ENSSSCP00055010798.1"/>
    <property type="gene ID" value="ENSSSCG00055007049.1"/>
</dbReference>
<dbReference type="Ensembl" id="ENSSSCT00055013737.1">
    <property type="protein sequence ID" value="ENSSSCP00055010814.1"/>
    <property type="gene ID" value="ENSSSCG00055007049.1"/>
</dbReference>
<dbReference type="Ensembl" id="ENSSSCT00055013748.1">
    <property type="protein sequence ID" value="ENSSSCP00055010824.1"/>
    <property type="gene ID" value="ENSSSCG00055007049.1"/>
</dbReference>
<dbReference type="Ensembl" id="ENSSSCT00055013757.1">
    <property type="protein sequence ID" value="ENSSSCP00055010833.1"/>
    <property type="gene ID" value="ENSSSCG00055007049.1"/>
</dbReference>
<dbReference type="Ensembl" id="ENSSSCT00060027098.1">
    <property type="protein sequence ID" value="ENSSSCP00060011546.1"/>
    <property type="gene ID" value="ENSSSCG00060020044.1"/>
</dbReference>
<dbReference type="Ensembl" id="ENSSSCT00060027099.1">
    <property type="protein sequence ID" value="ENSSSCP00060011547.1"/>
    <property type="gene ID" value="ENSSSCG00060020044.1"/>
</dbReference>
<dbReference type="Ensembl" id="ENSSSCT00060027100.1">
    <property type="protein sequence ID" value="ENSSSCP00060011548.1"/>
    <property type="gene ID" value="ENSSSCG00060020044.1"/>
</dbReference>
<dbReference type="Ensembl" id="ENSSSCT00060027104.1">
    <property type="protein sequence ID" value="ENSSSCP00060011550.1"/>
    <property type="gene ID" value="ENSSSCG00060020044.1"/>
</dbReference>
<dbReference type="Ensembl" id="ENSSSCT00060027107.1">
    <property type="protein sequence ID" value="ENSSSCP00060011551.1"/>
    <property type="gene ID" value="ENSSSCG00060020044.1"/>
</dbReference>
<dbReference type="Ensembl" id="ENSSSCT00060027109.1">
    <property type="protein sequence ID" value="ENSSSCP00060011552.1"/>
    <property type="gene ID" value="ENSSSCG00060020044.1"/>
</dbReference>
<dbReference type="Ensembl" id="ENSSSCT00065068071.1">
    <property type="protein sequence ID" value="ENSSSCP00065029638.1"/>
    <property type="gene ID" value="ENSSSCG00065049702.1"/>
</dbReference>
<dbReference type="Ensembl" id="ENSSSCT00065068076.1">
    <property type="protein sequence ID" value="ENSSSCP00065029642.1"/>
    <property type="gene ID" value="ENSSSCG00065049702.1"/>
</dbReference>
<dbReference type="Ensembl" id="ENSSSCT00065068078.1">
    <property type="protein sequence ID" value="ENSSSCP00065029644.1"/>
    <property type="gene ID" value="ENSSSCG00065049702.1"/>
</dbReference>
<dbReference type="Ensembl" id="ENSSSCT00065068086.1">
    <property type="protein sequence ID" value="ENSSSCP00065029647.1"/>
    <property type="gene ID" value="ENSSSCG00065049702.1"/>
</dbReference>
<dbReference type="Ensembl" id="ENSSSCT00065068090.1">
    <property type="protein sequence ID" value="ENSSSCP00065029648.1"/>
    <property type="gene ID" value="ENSSSCG00065049702.1"/>
</dbReference>
<dbReference type="Ensembl" id="ENSSSCT00065068091.1">
    <property type="protein sequence ID" value="ENSSSCP00065029649.1"/>
    <property type="gene ID" value="ENSSSCG00065049702.1"/>
</dbReference>
<dbReference type="Ensembl" id="ENSSSCT00085021019">
    <property type="protein sequence ID" value="ENSSSCP00085014490"/>
    <property type="gene ID" value="ENSSSCG00085011243"/>
</dbReference>
<dbReference type="Ensembl" id="ENSSSCT00085021020">
    <property type="protein sequence ID" value="ENSSSCP00085014491"/>
    <property type="gene ID" value="ENSSSCG00085011243"/>
</dbReference>
<dbReference type="Ensembl" id="ENSSSCT00085021023">
    <property type="protein sequence ID" value="ENSSSCP00085014494"/>
    <property type="gene ID" value="ENSSSCG00085011243"/>
</dbReference>
<dbReference type="Ensembl" id="ENSSSCT00085021026">
    <property type="protein sequence ID" value="ENSSSCP00085014497"/>
    <property type="gene ID" value="ENSSSCG00085011243"/>
</dbReference>
<dbReference type="Ensembl" id="ENSSSCT00085021030">
    <property type="protein sequence ID" value="ENSSSCP00085014500"/>
    <property type="gene ID" value="ENSSSCG00085011243"/>
</dbReference>
<dbReference type="Ensembl" id="ENSSSCT00085021031">
    <property type="protein sequence ID" value="ENSSSCP00085014502"/>
    <property type="gene ID" value="ENSSSCG00085011243"/>
</dbReference>
<dbReference type="Ensembl" id="ENSSSCT00085021035">
    <property type="protein sequence ID" value="ENSSSCP00085014506"/>
    <property type="gene ID" value="ENSSSCG00085011243"/>
</dbReference>
<dbReference type="Ensembl" id="ENSSSCT00085021036">
    <property type="protein sequence ID" value="ENSSSCP00085014507"/>
    <property type="gene ID" value="ENSSSCG00085011243"/>
</dbReference>
<dbReference type="Ensembl" id="ENSSSCT00085021037">
    <property type="protein sequence ID" value="ENSSSCP00085014508"/>
    <property type="gene ID" value="ENSSSCG00085011243"/>
</dbReference>
<dbReference type="Ensembl" id="ENSSSCT00085021041">
    <property type="protein sequence ID" value="ENSSSCP00085014512"/>
    <property type="gene ID" value="ENSSSCG00085011243"/>
</dbReference>
<dbReference type="Ensembl" id="ENSSSCT00090009656">
    <property type="protein sequence ID" value="ENSSSCP00090005859"/>
    <property type="gene ID" value="ENSSSCG00090005530"/>
</dbReference>
<dbReference type="Ensembl" id="ENSSSCT00090009660">
    <property type="protein sequence ID" value="ENSSSCP00090005862"/>
    <property type="gene ID" value="ENSSSCG00090005530"/>
</dbReference>
<dbReference type="Ensembl" id="ENSSSCT00090009666">
    <property type="protein sequence ID" value="ENSSSCP00090005865"/>
    <property type="gene ID" value="ENSSSCG00090005530"/>
</dbReference>
<dbReference type="Ensembl" id="ENSSSCT00090009675">
    <property type="protein sequence ID" value="ENSSSCP00090005871"/>
    <property type="gene ID" value="ENSSSCG00090005530"/>
</dbReference>
<dbReference type="Ensembl" id="ENSSSCT00090009680">
    <property type="protein sequence ID" value="ENSSSCP00090005875"/>
    <property type="gene ID" value="ENSSSCG00090005530"/>
</dbReference>
<dbReference type="Ensembl" id="ENSSSCT00090009688">
    <property type="protein sequence ID" value="ENSSSCP00090005879"/>
    <property type="gene ID" value="ENSSSCG00090005530"/>
</dbReference>
<dbReference type="Ensembl" id="ENSSSCT00090009692">
    <property type="protein sequence ID" value="ENSSSCP00090005881"/>
    <property type="gene ID" value="ENSSSCG00090005530"/>
</dbReference>
<dbReference type="Ensembl" id="ENSSSCT00090009697">
    <property type="protein sequence ID" value="ENSSSCP00090005884"/>
    <property type="gene ID" value="ENSSSCG00090005530"/>
</dbReference>
<dbReference type="Ensembl" id="ENSSSCT00090009703">
    <property type="protein sequence ID" value="ENSSSCP00090005888"/>
    <property type="gene ID" value="ENSSSCG00090005530"/>
</dbReference>
<dbReference type="Ensembl" id="ENSSSCT00090009705">
    <property type="protein sequence ID" value="ENSSSCP00090005889"/>
    <property type="gene ID" value="ENSSSCG00090005530"/>
</dbReference>
<dbReference type="Ensembl" id="ENSSSCT00105030241">
    <property type="protein sequence ID" value="ENSSSCP00105021022"/>
    <property type="gene ID" value="ENSSSCG00105015767"/>
</dbReference>
<dbReference type="Ensembl" id="ENSSSCT00105030249">
    <property type="protein sequence ID" value="ENSSSCP00105021028"/>
    <property type="gene ID" value="ENSSSCG00105015767"/>
</dbReference>
<dbReference type="Ensembl" id="ENSSSCT00105030258">
    <property type="protein sequence ID" value="ENSSSCP00105021035"/>
    <property type="gene ID" value="ENSSSCG00105015767"/>
</dbReference>
<dbReference type="Ensembl" id="ENSSSCT00105030269">
    <property type="protein sequence ID" value="ENSSSCP00105021044"/>
    <property type="gene ID" value="ENSSSCG00105015767"/>
</dbReference>
<dbReference type="Ensembl" id="ENSSSCT00105030272">
    <property type="protein sequence ID" value="ENSSSCP00105021047"/>
    <property type="gene ID" value="ENSSSCG00105015767"/>
</dbReference>
<dbReference type="Ensembl" id="ENSSSCT00105030282">
    <property type="protein sequence ID" value="ENSSSCP00105021053"/>
    <property type="gene ID" value="ENSSSCG00105015767"/>
</dbReference>
<dbReference type="Ensembl" id="ENSSSCT00105030292">
    <property type="protein sequence ID" value="ENSSSCP00105021060"/>
    <property type="gene ID" value="ENSSSCG00105015767"/>
</dbReference>
<dbReference type="Ensembl" id="ENSSSCT00105030305">
    <property type="protein sequence ID" value="ENSSSCP00105021071"/>
    <property type="gene ID" value="ENSSSCG00105015767"/>
</dbReference>
<dbReference type="Ensembl" id="ENSSSCT00105030323">
    <property type="protein sequence ID" value="ENSSSCP00105021084"/>
    <property type="gene ID" value="ENSSSCG00105015767"/>
</dbReference>
<dbReference type="Ensembl" id="ENSSSCT00105030329">
    <property type="protein sequence ID" value="ENSSSCP00105021089"/>
    <property type="gene ID" value="ENSSSCG00105015767"/>
</dbReference>
<dbReference type="Ensembl" id="ENSSSCT00110068909">
    <property type="protein sequence ID" value="ENSSSCP00110048516"/>
    <property type="gene ID" value="ENSSSCG00110036258"/>
</dbReference>
<dbReference type="Ensembl" id="ENSSSCT00110068910">
    <property type="protein sequence ID" value="ENSSSCP00110048517"/>
    <property type="gene ID" value="ENSSSCG00110036258"/>
</dbReference>
<dbReference type="Ensembl" id="ENSSSCT00110068916">
    <property type="protein sequence ID" value="ENSSSCP00110048523"/>
    <property type="gene ID" value="ENSSSCG00110036258"/>
</dbReference>
<dbReference type="Ensembl" id="ENSSSCT00110068918">
    <property type="protein sequence ID" value="ENSSSCP00110048525"/>
    <property type="gene ID" value="ENSSSCG00110036258"/>
</dbReference>
<dbReference type="Ensembl" id="ENSSSCT00110068921">
    <property type="protein sequence ID" value="ENSSSCP00110048528"/>
    <property type="gene ID" value="ENSSSCG00110036258"/>
</dbReference>
<dbReference type="Ensembl" id="ENSSSCT00110068925">
    <property type="protein sequence ID" value="ENSSSCP00110048532"/>
    <property type="gene ID" value="ENSSSCG00110036258"/>
</dbReference>
<dbReference type="Ensembl" id="ENSSSCT00110068931">
    <property type="protein sequence ID" value="ENSSSCP00110048538"/>
    <property type="gene ID" value="ENSSSCG00110036258"/>
</dbReference>
<dbReference type="Ensembl" id="ENSSSCT00110068938">
    <property type="protein sequence ID" value="ENSSSCP00110048545"/>
    <property type="gene ID" value="ENSSSCG00110036258"/>
</dbReference>
<dbReference type="Ensembl" id="ENSSSCT00110068943">
    <property type="protein sequence ID" value="ENSSSCP00110048550"/>
    <property type="gene ID" value="ENSSSCG00110036258"/>
</dbReference>
<dbReference type="Ensembl" id="ENSSSCT00110068946">
    <property type="protein sequence ID" value="ENSSSCP00110048553"/>
    <property type="gene ID" value="ENSSSCG00110036258"/>
</dbReference>
<dbReference type="Ensembl" id="ENSSSCT00115013890">
    <property type="protein sequence ID" value="ENSSSCP00115013132"/>
    <property type="gene ID" value="ENSSSCG00115007955"/>
</dbReference>
<dbReference type="Ensembl" id="ENSSSCT00130008227">
    <property type="protein sequence ID" value="ENSSSCP00130005569"/>
    <property type="gene ID" value="ENSSSCG00130004400"/>
</dbReference>
<dbReference type="Ensembl" id="ENSSSCT00130008232">
    <property type="protein sequence ID" value="ENSSSCP00130005573"/>
    <property type="gene ID" value="ENSSSCG00130004400"/>
</dbReference>
<dbReference type="Ensembl" id="ENSSSCT00130008234">
    <property type="protein sequence ID" value="ENSSSCP00130005574"/>
    <property type="gene ID" value="ENSSSCG00130004400"/>
</dbReference>
<dbReference type="Ensembl" id="ENSSSCT00130008239">
    <property type="protein sequence ID" value="ENSSSCP00130005576"/>
    <property type="gene ID" value="ENSSSCG00130004400"/>
</dbReference>
<dbReference type="Ensembl" id="ENSSSCT00130008242">
    <property type="protein sequence ID" value="ENSSSCP00130005579"/>
    <property type="gene ID" value="ENSSSCG00130004400"/>
</dbReference>
<dbReference type="Ensembl" id="ENSSSCT00130008245">
    <property type="protein sequence ID" value="ENSSSCP00130005580"/>
    <property type="gene ID" value="ENSSSCG00130004400"/>
</dbReference>
<dbReference type="Ensembl" id="ENSSSCT00130008250">
    <property type="protein sequence ID" value="ENSSSCP00130005582"/>
    <property type="gene ID" value="ENSSSCG00130004400"/>
</dbReference>
<dbReference type="Ensembl" id="ENSSSCT00130008255">
    <property type="protein sequence ID" value="ENSSSCP00130005585"/>
    <property type="gene ID" value="ENSSSCG00130004400"/>
</dbReference>
<dbReference type="Ensembl" id="ENSSSCT00130008258">
    <property type="protein sequence ID" value="ENSSSCP00130005586"/>
    <property type="gene ID" value="ENSSSCG00130004400"/>
</dbReference>
<dbReference type="Ensembl" id="ENSSSCT00130008265">
    <property type="protein sequence ID" value="ENSSSCP00130005591"/>
    <property type="gene ID" value="ENSSSCG00130004400"/>
</dbReference>
<dbReference type="GeneID" id="733689"/>
<dbReference type="KEGG" id="ssc:733689"/>
<dbReference type="CTD" id="9443"/>
<dbReference type="VGNC" id="VGNC:90123">
    <property type="gene designation" value="MED7"/>
</dbReference>
<dbReference type="eggNOG" id="KOG0570">
    <property type="taxonomic scope" value="Eukaryota"/>
</dbReference>
<dbReference type="GeneTree" id="ENSGT00940000154444"/>
<dbReference type="HOGENOM" id="CLU_065214_2_0_1"/>
<dbReference type="InParanoid" id="Q2F7Z4"/>
<dbReference type="OMA" id="IHDSYSM"/>
<dbReference type="OrthoDB" id="10253553at2759"/>
<dbReference type="TreeFam" id="TF314411"/>
<dbReference type="Reactome" id="R-SSC-212436">
    <property type="pathway name" value="Generic Transcription Pathway"/>
</dbReference>
<dbReference type="Reactome" id="R-SSC-9841922">
    <property type="pathway name" value="MLL4 and MLL3 complexes regulate expression of PPARG target genes in adipogenesis and hepatic steatosis"/>
</dbReference>
<dbReference type="Proteomes" id="UP000008227">
    <property type="component" value="Chromosome 16"/>
</dbReference>
<dbReference type="Proteomes" id="UP000314985">
    <property type="component" value="Unplaced"/>
</dbReference>
<dbReference type="Proteomes" id="UP000694570">
    <property type="component" value="Unplaced"/>
</dbReference>
<dbReference type="Proteomes" id="UP000694571">
    <property type="component" value="Unplaced"/>
</dbReference>
<dbReference type="Proteomes" id="UP000694720">
    <property type="component" value="Unplaced"/>
</dbReference>
<dbReference type="Proteomes" id="UP000694722">
    <property type="component" value="Unplaced"/>
</dbReference>
<dbReference type="Proteomes" id="UP000694723">
    <property type="component" value="Unplaced"/>
</dbReference>
<dbReference type="Proteomes" id="UP000694724">
    <property type="component" value="Unplaced"/>
</dbReference>
<dbReference type="Proteomes" id="UP000694725">
    <property type="component" value="Unplaced"/>
</dbReference>
<dbReference type="Proteomes" id="UP000694726">
    <property type="component" value="Unplaced"/>
</dbReference>
<dbReference type="Proteomes" id="UP000694727">
    <property type="component" value="Unplaced"/>
</dbReference>
<dbReference type="Proteomes" id="UP000694728">
    <property type="component" value="Unplaced"/>
</dbReference>
<dbReference type="Bgee" id="ENSSSCG00000017058">
    <property type="expression patterns" value="Expressed in oocyte and 45 other cell types or tissues"/>
</dbReference>
<dbReference type="ExpressionAtlas" id="Q2F7Z4">
    <property type="expression patterns" value="baseline and differential"/>
</dbReference>
<dbReference type="GO" id="GO:0070847">
    <property type="term" value="C:core mediator complex"/>
    <property type="evidence" value="ECO:0007669"/>
    <property type="project" value="Ensembl"/>
</dbReference>
<dbReference type="GO" id="GO:0016592">
    <property type="term" value="C:mediator complex"/>
    <property type="evidence" value="ECO:0000318"/>
    <property type="project" value="GO_Central"/>
</dbReference>
<dbReference type="GO" id="GO:0016604">
    <property type="term" value="C:nuclear body"/>
    <property type="evidence" value="ECO:0007669"/>
    <property type="project" value="Ensembl"/>
</dbReference>
<dbReference type="GO" id="GO:0003712">
    <property type="term" value="F:transcription coregulator activity"/>
    <property type="evidence" value="ECO:0007669"/>
    <property type="project" value="InterPro"/>
</dbReference>
<dbReference type="GO" id="GO:0006357">
    <property type="term" value="P:regulation of transcription by RNA polymerase II"/>
    <property type="evidence" value="ECO:0000318"/>
    <property type="project" value="GO_Central"/>
</dbReference>
<dbReference type="GO" id="GO:0035019">
    <property type="term" value="P:somatic stem cell population maintenance"/>
    <property type="evidence" value="ECO:0007669"/>
    <property type="project" value="Ensembl"/>
</dbReference>
<dbReference type="Gene3D" id="6.10.140.200">
    <property type="match status" value="1"/>
</dbReference>
<dbReference type="InterPro" id="IPR051669">
    <property type="entry name" value="Immune_Mod/Transcr_Coactivator"/>
</dbReference>
<dbReference type="InterPro" id="IPR037212">
    <property type="entry name" value="Med7/Med21-like"/>
</dbReference>
<dbReference type="InterPro" id="IPR009244">
    <property type="entry name" value="Mediatior_Med7"/>
</dbReference>
<dbReference type="InterPro" id="IPR044888">
    <property type="entry name" value="Mediatior_Med7_sf"/>
</dbReference>
<dbReference type="PANTHER" id="PTHR15498:SF74">
    <property type="entry name" value="MEDIATOR OF RNA POLYMERASE II TRANSCRIPTION SUBUNIT 7"/>
    <property type="match status" value="1"/>
</dbReference>
<dbReference type="PANTHER" id="PTHR15498">
    <property type="entry name" value="T-CELL IMMUNOGLOBULIN AND MUCIN DOMAIN CONTAINING TIM"/>
    <property type="match status" value="1"/>
</dbReference>
<dbReference type="Pfam" id="PF05983">
    <property type="entry name" value="Med7"/>
    <property type="match status" value="1"/>
</dbReference>
<dbReference type="SUPFAM" id="SSF140718">
    <property type="entry name" value="Mediator hinge subcomplex-like"/>
    <property type="match status" value="1"/>
</dbReference>
<proteinExistence type="evidence at transcript level"/>
<protein>
    <recommendedName>
        <fullName>Mediator of RNA polymerase II transcription subunit 7</fullName>
    </recommendedName>
    <alternativeName>
        <fullName>Cofactor required for Sp1 transcriptional activation subunit 9</fullName>
        <shortName>CRSP complex subunit 9</shortName>
    </alternativeName>
    <alternativeName>
        <fullName>Mediator complex subunit 7</fullName>
    </alternativeName>
</protein>
<organism>
    <name type="scientific">Sus scrofa</name>
    <name type="common">Pig</name>
    <dbReference type="NCBI Taxonomy" id="9823"/>
    <lineage>
        <taxon>Eukaryota</taxon>
        <taxon>Metazoa</taxon>
        <taxon>Chordata</taxon>
        <taxon>Craniata</taxon>
        <taxon>Vertebrata</taxon>
        <taxon>Euteleostomi</taxon>
        <taxon>Mammalia</taxon>
        <taxon>Eutheria</taxon>
        <taxon>Laurasiatheria</taxon>
        <taxon>Artiodactyla</taxon>
        <taxon>Suina</taxon>
        <taxon>Suidae</taxon>
        <taxon>Sus</taxon>
    </lineage>
</organism>
<sequence>MGEPQQVSALPPPPMQYIKEYTDENIQEGLAPKPPPPIKDSYMMFGNQFQCDDLIIRPLESQGIERLHPMQFDHKKELRKLNMSILINFLDLLDILIRSPGSIKREEKLEDLKLLFVHVHHLINEYRPHQARETLRVMMEVQKRQRLETAERFQKHLERVIEMIQNCLASLPDDLPHSEAGMRVKAEPMDADDSNNCTGQSDQQRENSGHRRDQIIEKDAALCVLIDEMNERP</sequence>
<evidence type="ECO:0000250" key="1"/>
<evidence type="ECO:0000250" key="2">
    <source>
        <dbReference type="UniProtKB" id="O43513"/>
    </source>
</evidence>
<evidence type="ECO:0000256" key="3">
    <source>
        <dbReference type="SAM" id="MobiDB-lite"/>
    </source>
</evidence>
<evidence type="ECO:0000305" key="4"/>
<keyword id="KW-0010">Activator</keyword>
<keyword id="KW-1017">Isopeptide bond</keyword>
<keyword id="KW-0539">Nucleus</keyword>
<keyword id="KW-0597">Phosphoprotein</keyword>
<keyword id="KW-1185">Reference proteome</keyword>
<keyword id="KW-0804">Transcription</keyword>
<keyword id="KW-0805">Transcription regulation</keyword>
<keyword id="KW-0832">Ubl conjugation</keyword>